<reference key="1">
    <citation type="journal article" date="2009" name="BMC Genomics">
        <title>Pseudogene accumulation in the evolutionary histories of Salmonella enterica serovars Paratyphi A and Typhi.</title>
        <authorList>
            <person name="Holt K.E."/>
            <person name="Thomson N.R."/>
            <person name="Wain J."/>
            <person name="Langridge G.C."/>
            <person name="Hasan R."/>
            <person name="Bhutta Z.A."/>
            <person name="Quail M.A."/>
            <person name="Norbertczak H."/>
            <person name="Walker D."/>
            <person name="Simmonds M."/>
            <person name="White B."/>
            <person name="Bason N."/>
            <person name="Mungall K."/>
            <person name="Dougan G."/>
            <person name="Parkhill J."/>
        </authorList>
    </citation>
    <scope>NUCLEOTIDE SEQUENCE [LARGE SCALE GENOMIC DNA]</scope>
    <source>
        <strain>AKU_12601</strain>
    </source>
</reference>
<keyword id="KW-0028">Amino-acid biosynthesis</keyword>
<keyword id="KW-0067">ATP-binding</keyword>
<keyword id="KW-0963">Cytoplasm</keyword>
<keyword id="KW-0418">Kinase</keyword>
<keyword id="KW-0547">Nucleotide-binding</keyword>
<keyword id="KW-0791">Threonine biosynthesis</keyword>
<keyword id="KW-0808">Transferase</keyword>
<sequence>MVKVYAPASSANMSVGFDVLGAAVTPVDGTLLGDVVSVEAADHFRLHNLGRFADKLPPEPRENIVYQCWERFCQALGKTIPVAMTLEKNMPIGSGLGSSACSVVAALVAMNEHCGKPLNDTRLLALMGELEGRISGSIHYDNVAPCFLGGMQLMIEENGIISQQVPGFDEWLWVLAYPGIKVSTAEARAILPAQYRRQDCIAHGRHLAGFIHACYSRQPQLAAALMKDVIAEPYRARLLPGFSQARQAVSEIGALASGISGSGPTLFALCDKPETAQRVADWLSKHYLQNQEGFVHICRLDTAGARVVG</sequence>
<evidence type="ECO:0000255" key="1">
    <source>
        <dbReference type="HAMAP-Rule" id="MF_00384"/>
    </source>
</evidence>
<comment type="function">
    <text evidence="1">Catalyzes the ATP-dependent phosphorylation of L-homoserine to L-homoserine phosphate.</text>
</comment>
<comment type="catalytic activity">
    <reaction evidence="1">
        <text>L-homoserine + ATP = O-phospho-L-homoserine + ADP + H(+)</text>
        <dbReference type="Rhea" id="RHEA:13985"/>
        <dbReference type="ChEBI" id="CHEBI:15378"/>
        <dbReference type="ChEBI" id="CHEBI:30616"/>
        <dbReference type="ChEBI" id="CHEBI:57476"/>
        <dbReference type="ChEBI" id="CHEBI:57590"/>
        <dbReference type="ChEBI" id="CHEBI:456216"/>
        <dbReference type="EC" id="2.7.1.39"/>
    </reaction>
</comment>
<comment type="pathway">
    <text evidence="1">Amino-acid biosynthesis; L-threonine biosynthesis; L-threonine from L-aspartate: step 4/5.</text>
</comment>
<comment type="subcellular location">
    <subcellularLocation>
        <location evidence="1">Cytoplasm</location>
    </subcellularLocation>
</comment>
<comment type="similarity">
    <text evidence="1">Belongs to the GHMP kinase family. Homoserine kinase subfamily.</text>
</comment>
<dbReference type="EC" id="2.7.1.39" evidence="1"/>
<dbReference type="EMBL" id="FM200053">
    <property type="protein sequence ID" value="CAR58110.1"/>
    <property type="molecule type" value="Genomic_DNA"/>
</dbReference>
<dbReference type="RefSeq" id="WP_000241685.1">
    <property type="nucleotide sequence ID" value="NC_011147.1"/>
</dbReference>
<dbReference type="SMR" id="B5BLG9"/>
<dbReference type="KEGG" id="sek:SSPA0003"/>
<dbReference type="HOGENOM" id="CLU_041243_1_1_6"/>
<dbReference type="UniPathway" id="UPA00050">
    <property type="reaction ID" value="UER00064"/>
</dbReference>
<dbReference type="Proteomes" id="UP000001869">
    <property type="component" value="Chromosome"/>
</dbReference>
<dbReference type="GO" id="GO:0005737">
    <property type="term" value="C:cytoplasm"/>
    <property type="evidence" value="ECO:0007669"/>
    <property type="project" value="UniProtKB-SubCell"/>
</dbReference>
<dbReference type="GO" id="GO:0005524">
    <property type="term" value="F:ATP binding"/>
    <property type="evidence" value="ECO:0007669"/>
    <property type="project" value="UniProtKB-UniRule"/>
</dbReference>
<dbReference type="GO" id="GO:0004413">
    <property type="term" value="F:homoserine kinase activity"/>
    <property type="evidence" value="ECO:0007669"/>
    <property type="project" value="UniProtKB-UniRule"/>
</dbReference>
<dbReference type="GO" id="GO:0009088">
    <property type="term" value="P:threonine biosynthetic process"/>
    <property type="evidence" value="ECO:0007669"/>
    <property type="project" value="UniProtKB-UniRule"/>
</dbReference>
<dbReference type="FunFam" id="3.30.230.10:FF:000020">
    <property type="entry name" value="Homoserine kinase"/>
    <property type="match status" value="1"/>
</dbReference>
<dbReference type="FunFam" id="3.30.70.890:FF:000002">
    <property type="entry name" value="Homoserine kinase"/>
    <property type="match status" value="1"/>
</dbReference>
<dbReference type="Gene3D" id="3.30.230.10">
    <property type="match status" value="1"/>
</dbReference>
<dbReference type="Gene3D" id="3.30.70.890">
    <property type="entry name" value="GHMP kinase, C-terminal domain"/>
    <property type="match status" value="1"/>
</dbReference>
<dbReference type="HAMAP" id="MF_00384">
    <property type="entry name" value="Homoser_kinase"/>
    <property type="match status" value="1"/>
</dbReference>
<dbReference type="InterPro" id="IPR013750">
    <property type="entry name" value="GHMP_kinase_C_dom"/>
</dbReference>
<dbReference type="InterPro" id="IPR036554">
    <property type="entry name" value="GHMP_kinase_C_sf"/>
</dbReference>
<dbReference type="InterPro" id="IPR006204">
    <property type="entry name" value="GHMP_kinase_N_dom"/>
</dbReference>
<dbReference type="InterPro" id="IPR006203">
    <property type="entry name" value="GHMP_knse_ATP-bd_CS"/>
</dbReference>
<dbReference type="InterPro" id="IPR000870">
    <property type="entry name" value="Homoserine_kinase"/>
</dbReference>
<dbReference type="InterPro" id="IPR020568">
    <property type="entry name" value="Ribosomal_Su5_D2-typ_SF"/>
</dbReference>
<dbReference type="InterPro" id="IPR014721">
    <property type="entry name" value="Ribsml_uS5_D2-typ_fold_subgr"/>
</dbReference>
<dbReference type="NCBIfam" id="NF002288">
    <property type="entry name" value="PRK01212.1-4"/>
    <property type="match status" value="1"/>
</dbReference>
<dbReference type="NCBIfam" id="TIGR00191">
    <property type="entry name" value="thrB"/>
    <property type="match status" value="1"/>
</dbReference>
<dbReference type="PANTHER" id="PTHR20861:SF1">
    <property type="entry name" value="HOMOSERINE KINASE"/>
    <property type="match status" value="1"/>
</dbReference>
<dbReference type="PANTHER" id="PTHR20861">
    <property type="entry name" value="HOMOSERINE/4-DIPHOSPHOCYTIDYL-2-C-METHYL-D-ERYTHRITOL KINASE"/>
    <property type="match status" value="1"/>
</dbReference>
<dbReference type="Pfam" id="PF08544">
    <property type="entry name" value="GHMP_kinases_C"/>
    <property type="match status" value="1"/>
</dbReference>
<dbReference type="Pfam" id="PF00288">
    <property type="entry name" value="GHMP_kinases_N"/>
    <property type="match status" value="1"/>
</dbReference>
<dbReference type="PIRSF" id="PIRSF000676">
    <property type="entry name" value="Homoser_kin"/>
    <property type="match status" value="1"/>
</dbReference>
<dbReference type="PRINTS" id="PR00958">
    <property type="entry name" value="HOMSERKINASE"/>
</dbReference>
<dbReference type="SUPFAM" id="SSF55060">
    <property type="entry name" value="GHMP Kinase, C-terminal domain"/>
    <property type="match status" value="1"/>
</dbReference>
<dbReference type="SUPFAM" id="SSF54211">
    <property type="entry name" value="Ribosomal protein S5 domain 2-like"/>
    <property type="match status" value="1"/>
</dbReference>
<dbReference type="PROSITE" id="PS00627">
    <property type="entry name" value="GHMP_KINASES_ATP"/>
    <property type="match status" value="1"/>
</dbReference>
<feature type="chain" id="PRO_1000122442" description="Homoserine kinase">
    <location>
        <begin position="1"/>
        <end position="309"/>
    </location>
</feature>
<feature type="binding site" evidence="1">
    <location>
        <begin position="91"/>
        <end position="101"/>
    </location>
    <ligand>
        <name>ATP</name>
        <dbReference type="ChEBI" id="CHEBI:30616"/>
    </ligand>
</feature>
<protein>
    <recommendedName>
        <fullName evidence="1">Homoserine kinase</fullName>
        <shortName evidence="1">HK</shortName>
        <shortName evidence="1">HSK</shortName>
        <ecNumber evidence="1">2.7.1.39</ecNumber>
    </recommendedName>
</protein>
<organism>
    <name type="scientific">Salmonella paratyphi A (strain AKU_12601)</name>
    <dbReference type="NCBI Taxonomy" id="554290"/>
    <lineage>
        <taxon>Bacteria</taxon>
        <taxon>Pseudomonadati</taxon>
        <taxon>Pseudomonadota</taxon>
        <taxon>Gammaproteobacteria</taxon>
        <taxon>Enterobacterales</taxon>
        <taxon>Enterobacteriaceae</taxon>
        <taxon>Salmonella</taxon>
    </lineage>
</organism>
<accession>B5BLG9</accession>
<proteinExistence type="inferred from homology"/>
<gene>
    <name evidence="1" type="primary">thrB</name>
    <name type="ordered locus">SSPA0003</name>
</gene>
<name>KHSE_SALPK</name>